<dbReference type="EMBL" id="CP001097">
    <property type="protein sequence ID" value="ACD89857.1"/>
    <property type="molecule type" value="Genomic_DNA"/>
</dbReference>
<dbReference type="RefSeq" id="WP_012465737.1">
    <property type="nucleotide sequence ID" value="NC_010803.1"/>
</dbReference>
<dbReference type="SMR" id="B3EHS7"/>
<dbReference type="STRING" id="290315.Clim_0777"/>
<dbReference type="KEGG" id="cli:Clim_0777"/>
<dbReference type="eggNOG" id="COG1678">
    <property type="taxonomic scope" value="Bacteria"/>
</dbReference>
<dbReference type="HOGENOM" id="CLU_057596_2_1_10"/>
<dbReference type="OrthoDB" id="9807486at2"/>
<dbReference type="Proteomes" id="UP000008841">
    <property type="component" value="Chromosome"/>
</dbReference>
<dbReference type="GO" id="GO:0005829">
    <property type="term" value="C:cytosol"/>
    <property type="evidence" value="ECO:0007669"/>
    <property type="project" value="TreeGrafter"/>
</dbReference>
<dbReference type="Gene3D" id="3.40.1740.10">
    <property type="entry name" value="VC0467-like"/>
    <property type="match status" value="1"/>
</dbReference>
<dbReference type="HAMAP" id="MF_00758">
    <property type="entry name" value="UPF0301"/>
    <property type="match status" value="1"/>
</dbReference>
<dbReference type="InterPro" id="IPR003774">
    <property type="entry name" value="AlgH-like"/>
</dbReference>
<dbReference type="PANTHER" id="PTHR30327">
    <property type="entry name" value="UNCHARACTERIZED PROTEIN YQGE"/>
    <property type="match status" value="1"/>
</dbReference>
<dbReference type="PANTHER" id="PTHR30327:SF1">
    <property type="entry name" value="UPF0301 PROTEIN YQGE"/>
    <property type="match status" value="1"/>
</dbReference>
<dbReference type="Pfam" id="PF02622">
    <property type="entry name" value="DUF179"/>
    <property type="match status" value="1"/>
</dbReference>
<dbReference type="SUPFAM" id="SSF143456">
    <property type="entry name" value="VC0467-like"/>
    <property type="match status" value="1"/>
</dbReference>
<comment type="similarity">
    <text evidence="1">Belongs to the UPF0301 (AlgH) family.</text>
</comment>
<name>Y777_CHLL2</name>
<organism>
    <name type="scientific">Chlorobium limicola (strain DSM 245 / NBRC 103803 / 6330)</name>
    <dbReference type="NCBI Taxonomy" id="290315"/>
    <lineage>
        <taxon>Bacteria</taxon>
        <taxon>Pseudomonadati</taxon>
        <taxon>Chlorobiota</taxon>
        <taxon>Chlorobiia</taxon>
        <taxon>Chlorobiales</taxon>
        <taxon>Chlorobiaceae</taxon>
        <taxon>Chlorobium/Pelodictyon group</taxon>
        <taxon>Chlorobium</taxon>
    </lineage>
</organism>
<feature type="chain" id="PRO_1000198264" description="UPF0301 protein Clim_0777">
    <location>
        <begin position="1"/>
        <end position="187"/>
    </location>
</feature>
<gene>
    <name type="ordered locus">Clim_0777</name>
</gene>
<protein>
    <recommendedName>
        <fullName evidence="1">UPF0301 protein Clim_0777</fullName>
    </recommendedName>
</protein>
<sequence length="187" mass="21078">MVNEFDKLRPGKLLLASANLLESNFKRTVLLMCEHNEQGSMGFILNRPMEFKVCEAIAGFEDIEEPLHMGGPVQVDTVHFIHSRGDSIDGAIEIFDGVFWGGDKDQLSYLINTGVINPNEIRFFLGYSGWGAGQLEQEFEEGSWYTADATREMIFTDAYERMWSRSVRSKGGEYRIVANSPELPGLN</sequence>
<accession>B3EHS7</accession>
<reference key="1">
    <citation type="submission" date="2008-05" db="EMBL/GenBank/DDBJ databases">
        <title>Complete sequence of Chlorobium limicola DSM 245.</title>
        <authorList>
            <consortium name="US DOE Joint Genome Institute"/>
            <person name="Lucas S."/>
            <person name="Copeland A."/>
            <person name="Lapidus A."/>
            <person name="Glavina del Rio T."/>
            <person name="Dalin E."/>
            <person name="Tice H."/>
            <person name="Bruce D."/>
            <person name="Goodwin L."/>
            <person name="Pitluck S."/>
            <person name="Schmutz J."/>
            <person name="Larimer F."/>
            <person name="Land M."/>
            <person name="Hauser L."/>
            <person name="Kyrpides N."/>
            <person name="Ovchinnikova G."/>
            <person name="Zhao F."/>
            <person name="Li T."/>
            <person name="Liu Z."/>
            <person name="Overmann J."/>
            <person name="Bryant D.A."/>
            <person name="Richardson P."/>
        </authorList>
    </citation>
    <scope>NUCLEOTIDE SEQUENCE [LARGE SCALE GENOMIC DNA]</scope>
    <source>
        <strain>DSM 245 / NBRC 103803 / 6330</strain>
    </source>
</reference>
<proteinExistence type="inferred from homology"/>
<evidence type="ECO:0000255" key="1">
    <source>
        <dbReference type="HAMAP-Rule" id="MF_00758"/>
    </source>
</evidence>